<gene>
    <name type="primary">arg12</name>
    <name type="ORF">SPBC428.05c</name>
</gene>
<sequence length="410" mass="46085">MPQEVKRCVLAYSGGLDTSCILAWLIEEGWEVICYMANVGQEEDWDAAREKALKVGAKKVYVEDLREEFINDTVIPAAQANAIYENVYLLGTSLARPIIARRQIQIAEKENCIAVSHGCTGKGNDQVRFELAYYALKPDVQVIAPWRLPVFFERFAGRKDLLEYAAAKGIPVTQTTKKPWSMDENIVHCSYEAGILEDPSMTPPKDMWKLTVDPKDAPDEVEELSIHFEKGAPTKLECKDGTFSGVVSIFYQLNAIARRNGVGRIDIVENRFSGLKSRGCYETPGLTILRTAHMDLEGLTMEREVRALRDQFVTFNLAKILYNGQFFSPCTRMLLAANNVSQEVVNGVVKLSVYKGNVTVLGRKSDTAHLYDEKLSSMDELGGFDPTWTSGFIQIESMRLRNSDEGKHWM</sequence>
<evidence type="ECO:0000250" key="1"/>
<evidence type="ECO:0000269" key="2">
    <source>
    </source>
</evidence>
<evidence type="ECO:0000269" key="3">
    <source>
    </source>
</evidence>
<evidence type="ECO:0000305" key="4"/>
<evidence type="ECO:0000305" key="5">
    <source>
    </source>
</evidence>
<accession>O94354</accession>
<proteinExistence type="evidence at protein level"/>
<name>ASSY_SCHPO</name>
<comment type="catalytic activity">
    <reaction evidence="5">
        <text>L-citrulline + L-aspartate + ATP = 2-(N(omega)-L-arginino)succinate + AMP + diphosphate + H(+)</text>
        <dbReference type="Rhea" id="RHEA:10932"/>
        <dbReference type="ChEBI" id="CHEBI:15378"/>
        <dbReference type="ChEBI" id="CHEBI:29991"/>
        <dbReference type="ChEBI" id="CHEBI:30616"/>
        <dbReference type="ChEBI" id="CHEBI:33019"/>
        <dbReference type="ChEBI" id="CHEBI:57472"/>
        <dbReference type="ChEBI" id="CHEBI:57743"/>
        <dbReference type="ChEBI" id="CHEBI:456215"/>
        <dbReference type="EC" id="6.3.4.5"/>
    </reaction>
</comment>
<comment type="pathway">
    <text evidence="5">Amino-acid biosynthesis; L-arginine biosynthesis; L-arginine from L-ornithine and carbamoyl phosphate: step 2/3.</text>
</comment>
<comment type="subunit">
    <text evidence="1">Homotetramer.</text>
</comment>
<comment type="subcellular location">
    <subcellularLocation>
        <location evidence="3">Cytoplasm</location>
    </subcellularLocation>
</comment>
<comment type="disruption phenotype">
    <text evidence="2">Causes arginine auxotrophy.</text>
</comment>
<comment type="similarity">
    <text evidence="4">Belongs to the argininosuccinate synthase family. Type 1 subfamily.</text>
</comment>
<protein>
    <recommendedName>
        <fullName>Argininosuccinate synthase</fullName>
        <ecNumber evidence="5">6.3.4.5</ecNumber>
    </recommendedName>
    <alternativeName>
        <fullName>Citrulline--aspartate ligase</fullName>
    </alternativeName>
</protein>
<feature type="chain" id="PRO_0000148558" description="Argininosuccinate synthase">
    <location>
        <begin position="1"/>
        <end position="410"/>
    </location>
</feature>
<feature type="binding site" evidence="1">
    <location>
        <begin position="11"/>
        <end position="19"/>
    </location>
    <ligand>
        <name>ATP</name>
        <dbReference type="ChEBI" id="CHEBI:30616"/>
    </ligand>
</feature>
<feature type="binding site" evidence="1">
    <location>
        <position position="37"/>
    </location>
    <ligand>
        <name>ATP</name>
        <dbReference type="ChEBI" id="CHEBI:30616"/>
    </ligand>
</feature>
<feature type="binding site" evidence="1">
    <location>
        <position position="88"/>
    </location>
    <ligand>
        <name>L-citrulline</name>
        <dbReference type="ChEBI" id="CHEBI:57743"/>
    </ligand>
</feature>
<feature type="binding site" evidence="1">
    <location>
        <position position="93"/>
    </location>
    <ligand>
        <name>L-citrulline</name>
        <dbReference type="ChEBI" id="CHEBI:57743"/>
    </ligand>
</feature>
<feature type="binding site" evidence="1">
    <location>
        <begin position="116"/>
        <end position="124"/>
    </location>
    <ligand>
        <name>ATP</name>
        <dbReference type="ChEBI" id="CHEBI:30616"/>
    </ligand>
</feature>
<feature type="binding site" evidence="1">
    <location>
        <position position="120"/>
    </location>
    <ligand>
        <name>L-aspartate</name>
        <dbReference type="ChEBI" id="CHEBI:29991"/>
    </ligand>
</feature>
<feature type="binding site" evidence="1">
    <location>
        <position position="124"/>
    </location>
    <ligand>
        <name>L-aspartate</name>
        <dbReference type="ChEBI" id="CHEBI:29991"/>
    </ligand>
</feature>
<feature type="binding site" evidence="1">
    <location>
        <position position="124"/>
    </location>
    <ligand>
        <name>L-citrulline</name>
        <dbReference type="ChEBI" id="CHEBI:57743"/>
    </ligand>
</feature>
<feature type="binding site" evidence="1">
    <location>
        <position position="125"/>
    </location>
    <ligand>
        <name>L-aspartate</name>
        <dbReference type="ChEBI" id="CHEBI:29991"/>
    </ligand>
</feature>
<feature type="binding site" evidence="1">
    <location>
        <position position="128"/>
    </location>
    <ligand>
        <name>L-citrulline</name>
        <dbReference type="ChEBI" id="CHEBI:57743"/>
    </ligand>
</feature>
<feature type="binding site" evidence="1">
    <location>
        <position position="181"/>
    </location>
    <ligand>
        <name>L-citrulline</name>
        <dbReference type="ChEBI" id="CHEBI:57743"/>
    </ligand>
</feature>
<feature type="binding site" evidence="1">
    <location>
        <position position="190"/>
    </location>
    <ligand>
        <name>L-citrulline</name>
        <dbReference type="ChEBI" id="CHEBI:57743"/>
    </ligand>
</feature>
<feature type="binding site" evidence="1">
    <location>
        <position position="269"/>
    </location>
    <ligand>
        <name>L-citrulline</name>
        <dbReference type="ChEBI" id="CHEBI:57743"/>
    </ligand>
</feature>
<feature type="binding site" evidence="1">
    <location>
        <position position="281"/>
    </location>
    <ligand>
        <name>L-citrulline</name>
        <dbReference type="ChEBI" id="CHEBI:57743"/>
    </ligand>
</feature>
<keyword id="KW-0028">Amino-acid biosynthesis</keyword>
<keyword id="KW-0055">Arginine biosynthesis</keyword>
<keyword id="KW-0067">ATP-binding</keyword>
<keyword id="KW-0963">Cytoplasm</keyword>
<keyword id="KW-0436">Ligase</keyword>
<keyword id="KW-0547">Nucleotide-binding</keyword>
<keyword id="KW-1185">Reference proteome</keyword>
<organism>
    <name type="scientific">Schizosaccharomyces pombe (strain 972 / ATCC 24843)</name>
    <name type="common">Fission yeast</name>
    <dbReference type="NCBI Taxonomy" id="284812"/>
    <lineage>
        <taxon>Eukaryota</taxon>
        <taxon>Fungi</taxon>
        <taxon>Dikarya</taxon>
        <taxon>Ascomycota</taxon>
        <taxon>Taphrinomycotina</taxon>
        <taxon>Schizosaccharomycetes</taxon>
        <taxon>Schizosaccharomycetales</taxon>
        <taxon>Schizosaccharomycetaceae</taxon>
        <taxon>Schizosaccharomyces</taxon>
    </lineage>
</organism>
<dbReference type="EC" id="6.3.4.5" evidence="5"/>
<dbReference type="EMBL" id="CU329671">
    <property type="protein sequence ID" value="CAA22280.1"/>
    <property type="molecule type" value="Genomic_DNA"/>
</dbReference>
<dbReference type="PIR" id="T40457">
    <property type="entry name" value="T40457"/>
</dbReference>
<dbReference type="RefSeq" id="NP_595183.1">
    <property type="nucleotide sequence ID" value="NM_001021091.2"/>
</dbReference>
<dbReference type="SMR" id="O94354"/>
<dbReference type="BioGRID" id="277565">
    <property type="interactions" value="50"/>
</dbReference>
<dbReference type="FunCoup" id="O94354">
    <property type="interactions" value="586"/>
</dbReference>
<dbReference type="IntAct" id="O94354">
    <property type="interactions" value="1"/>
</dbReference>
<dbReference type="STRING" id="284812.O94354"/>
<dbReference type="iPTMnet" id="O94354"/>
<dbReference type="PaxDb" id="4896-SPBC428.05c.1"/>
<dbReference type="EnsemblFungi" id="SPBC428.05c.1">
    <property type="protein sequence ID" value="SPBC428.05c.1:pep"/>
    <property type="gene ID" value="SPBC428.05c"/>
</dbReference>
<dbReference type="GeneID" id="2541050"/>
<dbReference type="KEGG" id="spo:2541050"/>
<dbReference type="PomBase" id="SPBC428.05c">
    <property type="gene designation" value="arg12"/>
</dbReference>
<dbReference type="VEuPathDB" id="FungiDB:SPBC428.05c"/>
<dbReference type="eggNOG" id="KOG1706">
    <property type="taxonomic scope" value="Eukaryota"/>
</dbReference>
<dbReference type="HOGENOM" id="CLU_032784_4_2_1"/>
<dbReference type="InParanoid" id="O94354"/>
<dbReference type="OMA" id="WRWTVSP"/>
<dbReference type="PhylomeDB" id="O94354"/>
<dbReference type="UniPathway" id="UPA00068">
    <property type="reaction ID" value="UER00113"/>
</dbReference>
<dbReference type="PRO" id="PR:O94354"/>
<dbReference type="Proteomes" id="UP000002485">
    <property type="component" value="Chromosome II"/>
</dbReference>
<dbReference type="GO" id="GO:0005737">
    <property type="term" value="C:cytoplasm"/>
    <property type="evidence" value="ECO:0000318"/>
    <property type="project" value="GO_Central"/>
</dbReference>
<dbReference type="GO" id="GO:0005829">
    <property type="term" value="C:cytosol"/>
    <property type="evidence" value="ECO:0007005"/>
    <property type="project" value="PomBase"/>
</dbReference>
<dbReference type="GO" id="GO:0004055">
    <property type="term" value="F:argininosuccinate synthase activity"/>
    <property type="evidence" value="ECO:0000315"/>
    <property type="project" value="PomBase"/>
</dbReference>
<dbReference type="GO" id="GO:0005524">
    <property type="term" value="F:ATP binding"/>
    <property type="evidence" value="ECO:0007669"/>
    <property type="project" value="UniProtKB-KW"/>
</dbReference>
<dbReference type="GO" id="GO:0042450">
    <property type="term" value="P:arginine biosynthetic process via ornithine"/>
    <property type="evidence" value="ECO:0000269"/>
    <property type="project" value="PomBase"/>
</dbReference>
<dbReference type="GO" id="GO:0000053">
    <property type="term" value="P:argininosuccinate metabolic process"/>
    <property type="evidence" value="ECO:0000318"/>
    <property type="project" value="GO_Central"/>
</dbReference>
<dbReference type="GO" id="GO:0006526">
    <property type="term" value="P:L-arginine biosynthetic process"/>
    <property type="evidence" value="ECO:0000315"/>
    <property type="project" value="PomBase"/>
</dbReference>
<dbReference type="GO" id="GO:0000050">
    <property type="term" value="P:urea cycle"/>
    <property type="evidence" value="ECO:0000318"/>
    <property type="project" value="GO_Central"/>
</dbReference>
<dbReference type="CDD" id="cd01999">
    <property type="entry name" value="ASS"/>
    <property type="match status" value="1"/>
</dbReference>
<dbReference type="FunFam" id="3.40.50.620:FF:000019">
    <property type="entry name" value="Argininosuccinate synthase"/>
    <property type="match status" value="1"/>
</dbReference>
<dbReference type="FunFam" id="3.90.1260.10:FF:000003">
    <property type="entry name" value="Argininosuccinate synthase"/>
    <property type="match status" value="1"/>
</dbReference>
<dbReference type="Gene3D" id="3.90.1260.10">
    <property type="entry name" value="Argininosuccinate synthetase, chain A, domain 2"/>
    <property type="match status" value="1"/>
</dbReference>
<dbReference type="Gene3D" id="3.40.50.620">
    <property type="entry name" value="HUPs"/>
    <property type="match status" value="1"/>
</dbReference>
<dbReference type="HAMAP" id="MF_00005">
    <property type="entry name" value="Arg_succ_synth_type1"/>
    <property type="match status" value="1"/>
</dbReference>
<dbReference type="InterPro" id="IPR048268">
    <property type="entry name" value="Arginosuc_syn_C"/>
</dbReference>
<dbReference type="InterPro" id="IPR048267">
    <property type="entry name" value="Arginosuc_syn_N"/>
</dbReference>
<dbReference type="InterPro" id="IPR001518">
    <property type="entry name" value="Arginosuc_synth"/>
</dbReference>
<dbReference type="InterPro" id="IPR018223">
    <property type="entry name" value="Arginosuc_synth_CS"/>
</dbReference>
<dbReference type="InterPro" id="IPR023434">
    <property type="entry name" value="Arginosuc_synth_type_1_subfam"/>
</dbReference>
<dbReference type="InterPro" id="IPR024074">
    <property type="entry name" value="AS_cat/multimer_dom_body"/>
</dbReference>
<dbReference type="InterPro" id="IPR014729">
    <property type="entry name" value="Rossmann-like_a/b/a_fold"/>
</dbReference>
<dbReference type="NCBIfam" id="TIGR00032">
    <property type="entry name" value="argG"/>
    <property type="match status" value="1"/>
</dbReference>
<dbReference type="NCBIfam" id="NF001770">
    <property type="entry name" value="PRK00509.1"/>
    <property type="match status" value="1"/>
</dbReference>
<dbReference type="PANTHER" id="PTHR11587">
    <property type="entry name" value="ARGININOSUCCINATE SYNTHASE"/>
    <property type="match status" value="1"/>
</dbReference>
<dbReference type="PANTHER" id="PTHR11587:SF2">
    <property type="entry name" value="ARGININOSUCCINATE SYNTHASE"/>
    <property type="match status" value="1"/>
</dbReference>
<dbReference type="Pfam" id="PF20979">
    <property type="entry name" value="Arginosuc_syn_C"/>
    <property type="match status" value="1"/>
</dbReference>
<dbReference type="Pfam" id="PF00764">
    <property type="entry name" value="Arginosuc_synth"/>
    <property type="match status" value="1"/>
</dbReference>
<dbReference type="SUPFAM" id="SSF52402">
    <property type="entry name" value="Adenine nucleotide alpha hydrolases-like"/>
    <property type="match status" value="1"/>
</dbReference>
<dbReference type="SUPFAM" id="SSF69864">
    <property type="entry name" value="Argininosuccinate synthetase, C-terminal domain"/>
    <property type="match status" value="1"/>
</dbReference>
<dbReference type="PROSITE" id="PS00564">
    <property type="entry name" value="ARGININOSUCCIN_SYN_1"/>
    <property type="match status" value="1"/>
</dbReference>
<dbReference type="PROSITE" id="PS00565">
    <property type="entry name" value="ARGININOSUCCIN_SYN_2"/>
    <property type="match status" value="1"/>
</dbReference>
<reference key="1">
    <citation type="journal article" date="2002" name="Nature">
        <title>The genome sequence of Schizosaccharomyces pombe.</title>
        <authorList>
            <person name="Wood V."/>
            <person name="Gwilliam R."/>
            <person name="Rajandream M.A."/>
            <person name="Lyne M.H."/>
            <person name="Lyne R."/>
            <person name="Stewart A."/>
            <person name="Sgouros J.G."/>
            <person name="Peat N."/>
            <person name="Hayles J."/>
            <person name="Baker S.G."/>
            <person name="Basham D."/>
            <person name="Bowman S."/>
            <person name="Brooks K."/>
            <person name="Brown D."/>
            <person name="Brown S."/>
            <person name="Chillingworth T."/>
            <person name="Churcher C.M."/>
            <person name="Collins M."/>
            <person name="Connor R."/>
            <person name="Cronin A."/>
            <person name="Davis P."/>
            <person name="Feltwell T."/>
            <person name="Fraser A."/>
            <person name="Gentles S."/>
            <person name="Goble A."/>
            <person name="Hamlin N."/>
            <person name="Harris D.E."/>
            <person name="Hidalgo J."/>
            <person name="Hodgson G."/>
            <person name="Holroyd S."/>
            <person name="Hornsby T."/>
            <person name="Howarth S."/>
            <person name="Huckle E.J."/>
            <person name="Hunt S."/>
            <person name="Jagels K."/>
            <person name="James K.D."/>
            <person name="Jones L."/>
            <person name="Jones M."/>
            <person name="Leather S."/>
            <person name="McDonald S."/>
            <person name="McLean J."/>
            <person name="Mooney P."/>
            <person name="Moule S."/>
            <person name="Mungall K.L."/>
            <person name="Murphy L.D."/>
            <person name="Niblett D."/>
            <person name="Odell C."/>
            <person name="Oliver K."/>
            <person name="O'Neil S."/>
            <person name="Pearson D."/>
            <person name="Quail M.A."/>
            <person name="Rabbinowitsch E."/>
            <person name="Rutherford K.M."/>
            <person name="Rutter S."/>
            <person name="Saunders D."/>
            <person name="Seeger K."/>
            <person name="Sharp S."/>
            <person name="Skelton J."/>
            <person name="Simmonds M.N."/>
            <person name="Squares R."/>
            <person name="Squares S."/>
            <person name="Stevens K."/>
            <person name="Taylor K."/>
            <person name="Taylor R.G."/>
            <person name="Tivey A."/>
            <person name="Walsh S.V."/>
            <person name="Warren T."/>
            <person name="Whitehead S."/>
            <person name="Woodward J.R."/>
            <person name="Volckaert G."/>
            <person name="Aert R."/>
            <person name="Robben J."/>
            <person name="Grymonprez B."/>
            <person name="Weltjens I."/>
            <person name="Vanstreels E."/>
            <person name="Rieger M."/>
            <person name="Schaefer M."/>
            <person name="Mueller-Auer S."/>
            <person name="Gabel C."/>
            <person name="Fuchs M."/>
            <person name="Duesterhoeft A."/>
            <person name="Fritzc C."/>
            <person name="Holzer E."/>
            <person name="Moestl D."/>
            <person name="Hilbert H."/>
            <person name="Borzym K."/>
            <person name="Langer I."/>
            <person name="Beck A."/>
            <person name="Lehrach H."/>
            <person name="Reinhardt R."/>
            <person name="Pohl T.M."/>
            <person name="Eger P."/>
            <person name="Zimmermann W."/>
            <person name="Wedler H."/>
            <person name="Wambutt R."/>
            <person name="Purnelle B."/>
            <person name="Goffeau A."/>
            <person name="Cadieu E."/>
            <person name="Dreano S."/>
            <person name="Gloux S."/>
            <person name="Lelaure V."/>
            <person name="Mottier S."/>
            <person name="Galibert F."/>
            <person name="Aves S.J."/>
            <person name="Xiang Z."/>
            <person name="Hunt C."/>
            <person name="Moore K."/>
            <person name="Hurst S.M."/>
            <person name="Lucas M."/>
            <person name="Rochet M."/>
            <person name="Gaillardin C."/>
            <person name="Tallada V.A."/>
            <person name="Garzon A."/>
            <person name="Thode G."/>
            <person name="Daga R.R."/>
            <person name="Cruzado L."/>
            <person name="Jimenez J."/>
            <person name="Sanchez M."/>
            <person name="del Rey F."/>
            <person name="Benito J."/>
            <person name="Dominguez A."/>
            <person name="Revuelta J.L."/>
            <person name="Moreno S."/>
            <person name="Armstrong J."/>
            <person name="Forsburg S.L."/>
            <person name="Cerutti L."/>
            <person name="Lowe T."/>
            <person name="McCombie W.R."/>
            <person name="Paulsen I."/>
            <person name="Potashkin J."/>
            <person name="Shpakovski G.V."/>
            <person name="Ussery D."/>
            <person name="Barrell B.G."/>
            <person name="Nurse P."/>
        </authorList>
    </citation>
    <scope>NUCLEOTIDE SEQUENCE [LARGE SCALE GENOMIC DNA]</scope>
    <source>
        <strain>972 / ATCC 24843</strain>
    </source>
</reference>
<reference key="2">
    <citation type="journal article" date="2005" name="Yeast">
        <title>Development of a genetic transformation system using new selectable markers for fission yeast Schizosaccharomyces pombe.</title>
        <authorList>
            <person name="Fujita Y."/>
            <person name="Giga-Hama Y."/>
            <person name="Takegawa K."/>
        </authorList>
    </citation>
    <scope>CATALYTIC ACTIVITY</scope>
    <scope>PATHWAY</scope>
    <scope>DISRUPTION PHENOTYPE</scope>
</reference>
<reference key="3">
    <citation type="journal article" date="2006" name="Nat. Biotechnol.">
        <title>ORFeome cloning and global analysis of protein localization in the fission yeast Schizosaccharomyces pombe.</title>
        <authorList>
            <person name="Matsuyama A."/>
            <person name="Arai R."/>
            <person name="Yashiroda Y."/>
            <person name="Shirai A."/>
            <person name="Kamata A."/>
            <person name="Sekido S."/>
            <person name="Kobayashi Y."/>
            <person name="Hashimoto A."/>
            <person name="Hamamoto M."/>
            <person name="Hiraoka Y."/>
            <person name="Horinouchi S."/>
            <person name="Yoshida M."/>
        </authorList>
    </citation>
    <scope>SUBCELLULAR LOCATION [LARGE SCALE ANALYSIS]</scope>
</reference>